<dbReference type="EC" id="5.2.1.8" evidence="1"/>
<dbReference type="EMBL" id="CP000048">
    <property type="protein sequence ID" value="AAX17113.1"/>
    <property type="molecule type" value="Genomic_DNA"/>
</dbReference>
<dbReference type="RefSeq" id="WP_012422364.1">
    <property type="nucleotide sequence ID" value="NZ_CP073136.1"/>
</dbReference>
<dbReference type="SMR" id="B2S0V7"/>
<dbReference type="KEGG" id="bhr:BH0610"/>
<dbReference type="HOGENOM" id="CLU_033058_3_1_12"/>
<dbReference type="Proteomes" id="UP000008834">
    <property type="component" value="Chromosome"/>
</dbReference>
<dbReference type="GO" id="GO:0005737">
    <property type="term" value="C:cytoplasm"/>
    <property type="evidence" value="ECO:0007669"/>
    <property type="project" value="UniProtKB-SubCell"/>
</dbReference>
<dbReference type="GO" id="GO:0003755">
    <property type="term" value="F:peptidyl-prolyl cis-trans isomerase activity"/>
    <property type="evidence" value="ECO:0007669"/>
    <property type="project" value="UniProtKB-UniRule"/>
</dbReference>
<dbReference type="GO" id="GO:0051301">
    <property type="term" value="P:cell division"/>
    <property type="evidence" value="ECO:0007669"/>
    <property type="project" value="UniProtKB-KW"/>
</dbReference>
<dbReference type="GO" id="GO:0006457">
    <property type="term" value="P:protein folding"/>
    <property type="evidence" value="ECO:0007669"/>
    <property type="project" value="UniProtKB-UniRule"/>
</dbReference>
<dbReference type="GO" id="GO:0015031">
    <property type="term" value="P:protein transport"/>
    <property type="evidence" value="ECO:0007669"/>
    <property type="project" value="UniProtKB-UniRule"/>
</dbReference>
<dbReference type="Gene3D" id="3.10.50.40">
    <property type="match status" value="1"/>
</dbReference>
<dbReference type="Gene3D" id="3.30.70.1050">
    <property type="entry name" value="Trigger factor ribosome-binding domain"/>
    <property type="match status" value="1"/>
</dbReference>
<dbReference type="Gene3D" id="1.10.3120.10">
    <property type="entry name" value="Trigger factor, C-terminal domain"/>
    <property type="match status" value="1"/>
</dbReference>
<dbReference type="HAMAP" id="MF_00303">
    <property type="entry name" value="Trigger_factor_Tig"/>
    <property type="match status" value="1"/>
</dbReference>
<dbReference type="InterPro" id="IPR046357">
    <property type="entry name" value="PPIase_dom_sf"/>
</dbReference>
<dbReference type="InterPro" id="IPR005215">
    <property type="entry name" value="Trig_fac"/>
</dbReference>
<dbReference type="InterPro" id="IPR008880">
    <property type="entry name" value="Trigger_fac_C"/>
</dbReference>
<dbReference type="InterPro" id="IPR037041">
    <property type="entry name" value="Trigger_fac_C_sf"/>
</dbReference>
<dbReference type="InterPro" id="IPR008881">
    <property type="entry name" value="Trigger_fac_ribosome-bd_bac"/>
</dbReference>
<dbReference type="InterPro" id="IPR036611">
    <property type="entry name" value="Trigger_fac_ribosome-bd_sf"/>
</dbReference>
<dbReference type="InterPro" id="IPR027304">
    <property type="entry name" value="Trigger_fact/SurA_dom_sf"/>
</dbReference>
<dbReference type="NCBIfam" id="TIGR00115">
    <property type="entry name" value="tig"/>
    <property type="match status" value="1"/>
</dbReference>
<dbReference type="Pfam" id="PF05698">
    <property type="entry name" value="Trigger_C"/>
    <property type="match status" value="1"/>
</dbReference>
<dbReference type="Pfam" id="PF05697">
    <property type="entry name" value="Trigger_N"/>
    <property type="match status" value="1"/>
</dbReference>
<dbReference type="PIRSF" id="PIRSF003095">
    <property type="entry name" value="Trigger_factor"/>
    <property type="match status" value="1"/>
</dbReference>
<dbReference type="SUPFAM" id="SSF54534">
    <property type="entry name" value="FKBP-like"/>
    <property type="match status" value="1"/>
</dbReference>
<dbReference type="SUPFAM" id="SSF109998">
    <property type="entry name" value="Triger factor/SurA peptide-binding domain-like"/>
    <property type="match status" value="1"/>
</dbReference>
<dbReference type="SUPFAM" id="SSF102735">
    <property type="entry name" value="Trigger factor ribosome-binding domain"/>
    <property type="match status" value="1"/>
</dbReference>
<name>TIG_BORHD</name>
<accession>B2S0V7</accession>
<reference key="1">
    <citation type="submission" date="2004-12" db="EMBL/GenBank/DDBJ databases">
        <title>The genome sequence of Borrelia hermsii and Borrelia turicatae: comparative analysis of two agents of endemic N. America relapsing fever.</title>
        <authorList>
            <person name="Porcella S.F."/>
            <person name="Raffel S.J."/>
            <person name="Schrumpf M.E."/>
            <person name="Montgomery B."/>
            <person name="Smith T."/>
            <person name="Schwan T.G."/>
        </authorList>
    </citation>
    <scope>NUCLEOTIDE SEQUENCE [LARGE SCALE GENOMIC DNA]</scope>
    <source>
        <strain>HS1 / DAH</strain>
    </source>
</reference>
<comment type="function">
    <text evidence="1">Involved in protein export. Acts as a chaperone by maintaining the newly synthesized protein in an open conformation. Functions as a peptidyl-prolyl cis-trans isomerase.</text>
</comment>
<comment type="catalytic activity">
    <reaction evidence="1">
        <text>[protein]-peptidylproline (omega=180) = [protein]-peptidylproline (omega=0)</text>
        <dbReference type="Rhea" id="RHEA:16237"/>
        <dbReference type="Rhea" id="RHEA-COMP:10747"/>
        <dbReference type="Rhea" id="RHEA-COMP:10748"/>
        <dbReference type="ChEBI" id="CHEBI:83833"/>
        <dbReference type="ChEBI" id="CHEBI:83834"/>
        <dbReference type="EC" id="5.2.1.8"/>
    </reaction>
</comment>
<comment type="subcellular location">
    <subcellularLocation>
        <location>Cytoplasm</location>
    </subcellularLocation>
    <text evidence="1">About half TF is bound to the ribosome near the polypeptide exit tunnel while the other half is free in the cytoplasm.</text>
</comment>
<comment type="domain">
    <text evidence="1">Consists of 3 domains; the N-terminus binds the ribosome, the middle domain has PPIase activity, while the C-terminus has intrinsic chaperone activity on its own.</text>
</comment>
<comment type="similarity">
    <text evidence="1">Belongs to the FKBP-type PPIase family. Tig subfamily.</text>
</comment>
<proteinExistence type="inferred from homology"/>
<organism>
    <name type="scientific">Borrelia hermsii (strain HS1 / DAH)</name>
    <dbReference type="NCBI Taxonomy" id="314723"/>
    <lineage>
        <taxon>Bacteria</taxon>
        <taxon>Pseudomonadati</taxon>
        <taxon>Spirochaetota</taxon>
        <taxon>Spirochaetia</taxon>
        <taxon>Spirochaetales</taxon>
        <taxon>Borreliaceae</taxon>
        <taxon>Borrelia</taxon>
    </lineage>
</organism>
<protein>
    <recommendedName>
        <fullName evidence="1">Trigger factor</fullName>
        <shortName evidence="1">TF</shortName>
        <ecNumber evidence="1">5.2.1.8</ecNumber>
    </recommendedName>
    <alternativeName>
        <fullName evidence="1">PPIase</fullName>
    </alternativeName>
</protein>
<sequence length="448" mass="51805">MILNDDVKLIPGSKVEAVIKISKEFVKGKYNEILQDYSSRLKIKGFRIGKVPFSIIEGKYSDNIRALTIEKLIHKSLEEFFKSATYKPLGYAVPKILDEKLEIDFNKDFEFTVVYEAYPEFEIPDISNVEVEIPEVTVSDSDVEDELKLLQLENAMVVDDSGDVKVGSIVRVDFVELDDSLSEILTTKRQDFVFTVGESNNYYGFDNDIIGMKKDEEKIIEKNYSADYKFSELANSFKRLKIIIKDIKKRDIPELDDDFAKDIKDSFNTLEELKAHIRENMLRLVKEKRESLKLSKLLSDVSEKLNIEIPSAMFEAELKNVVNEFSTQNKIDLKKLNDSSMGLEGVSDVFKENVLKKLKSKLVFQKIVDNDLTEITDADLEDELVKQAEDTKMRLSEIKKFYQEKNLLGILKDEIKRQKVKDKILKNVKEIKLKEIAFRDFINYKTGE</sequence>
<gene>
    <name evidence="1" type="primary">tig</name>
    <name type="ordered locus">BH0610</name>
</gene>
<feature type="chain" id="PRO_1000115503" description="Trigger factor">
    <location>
        <begin position="1"/>
        <end position="448"/>
    </location>
</feature>
<feature type="domain" description="PPIase FKBP-type" evidence="1">
    <location>
        <begin position="167"/>
        <end position="253"/>
    </location>
</feature>
<keyword id="KW-0131">Cell cycle</keyword>
<keyword id="KW-0132">Cell division</keyword>
<keyword id="KW-0143">Chaperone</keyword>
<keyword id="KW-0963">Cytoplasm</keyword>
<keyword id="KW-0413">Isomerase</keyword>
<keyword id="KW-0697">Rotamase</keyword>
<evidence type="ECO:0000255" key="1">
    <source>
        <dbReference type="HAMAP-Rule" id="MF_00303"/>
    </source>
</evidence>